<sequence length="120" mass="13683">MAKYRAGRINEEVKKEVSNIIHNDIKDPRLSAMVSVTDVNVTKDLKYAKVYVSIFGNEKAKEESLEALKSSVGFIRKEVGRRVKLRNTPEVIIEVDNSIERGMHIDELLHSIKENESNDN</sequence>
<gene>
    <name evidence="1" type="primary">rbfA</name>
    <name type="ordered locus">CBO2417.1</name>
    <name type="ordered locus">CLC_2264</name>
    <name type="ORF">CBO2417A</name>
</gene>
<feature type="chain" id="PRO_1000000095" description="Ribosome-binding factor A">
    <location>
        <begin position="1"/>
        <end position="120"/>
    </location>
</feature>
<organism>
    <name type="scientific">Clostridium botulinum (strain Hall / ATCC 3502 / NCTC 13319 / Type A)</name>
    <dbReference type="NCBI Taxonomy" id="441771"/>
    <lineage>
        <taxon>Bacteria</taxon>
        <taxon>Bacillati</taxon>
        <taxon>Bacillota</taxon>
        <taxon>Clostridia</taxon>
        <taxon>Eubacteriales</taxon>
        <taxon>Clostridiaceae</taxon>
        <taxon>Clostridium</taxon>
    </lineage>
</organism>
<dbReference type="EMBL" id="CP000727">
    <property type="protein sequence ID" value="ABS36719.1"/>
    <property type="molecule type" value="Genomic_DNA"/>
</dbReference>
<dbReference type="EMBL" id="AM412317">
    <property type="protein sequence ID" value="CAL83964.1"/>
    <property type="molecule type" value="Genomic_DNA"/>
</dbReference>
<dbReference type="RefSeq" id="WP_011986791.1">
    <property type="nucleotide sequence ID" value="NC_009698.1"/>
</dbReference>
<dbReference type="RefSeq" id="YP_001254913.1">
    <property type="nucleotide sequence ID" value="NC_009495.1"/>
</dbReference>
<dbReference type="RefSeq" id="YP_001388108.1">
    <property type="nucleotide sequence ID" value="NC_009698.1"/>
</dbReference>
<dbReference type="SMR" id="A5I4J2"/>
<dbReference type="GeneID" id="5204287"/>
<dbReference type="KEGG" id="cbh:CLC_2264"/>
<dbReference type="KEGG" id="cbo:CBO2417A"/>
<dbReference type="PATRIC" id="fig|413999.7.peg.2394"/>
<dbReference type="HOGENOM" id="CLU_089475_6_3_9"/>
<dbReference type="PRO" id="PR:A5I4J2"/>
<dbReference type="Proteomes" id="UP000001986">
    <property type="component" value="Chromosome"/>
</dbReference>
<dbReference type="GO" id="GO:0005829">
    <property type="term" value="C:cytosol"/>
    <property type="evidence" value="ECO:0000318"/>
    <property type="project" value="GO_Central"/>
</dbReference>
<dbReference type="GO" id="GO:0043024">
    <property type="term" value="F:ribosomal small subunit binding"/>
    <property type="evidence" value="ECO:0000318"/>
    <property type="project" value="GO_Central"/>
</dbReference>
<dbReference type="GO" id="GO:0030490">
    <property type="term" value="P:maturation of SSU-rRNA"/>
    <property type="evidence" value="ECO:0007669"/>
    <property type="project" value="UniProtKB-UniRule"/>
</dbReference>
<dbReference type="GO" id="GO:0042254">
    <property type="term" value="P:ribosome biogenesis"/>
    <property type="evidence" value="ECO:0000318"/>
    <property type="project" value="GO_Central"/>
</dbReference>
<dbReference type="FunFam" id="3.30.300.20:FF:000030">
    <property type="entry name" value="Ribosome-binding factor A"/>
    <property type="match status" value="1"/>
</dbReference>
<dbReference type="Gene3D" id="3.30.300.20">
    <property type="match status" value="1"/>
</dbReference>
<dbReference type="HAMAP" id="MF_00003">
    <property type="entry name" value="RbfA"/>
    <property type="match status" value="1"/>
</dbReference>
<dbReference type="InterPro" id="IPR015946">
    <property type="entry name" value="KH_dom-like_a/b"/>
</dbReference>
<dbReference type="InterPro" id="IPR000238">
    <property type="entry name" value="RbfA"/>
</dbReference>
<dbReference type="InterPro" id="IPR023799">
    <property type="entry name" value="RbfA_dom_sf"/>
</dbReference>
<dbReference type="InterPro" id="IPR020053">
    <property type="entry name" value="Ribosome-bd_factorA_CS"/>
</dbReference>
<dbReference type="NCBIfam" id="TIGR00082">
    <property type="entry name" value="rbfA"/>
    <property type="match status" value="1"/>
</dbReference>
<dbReference type="PANTHER" id="PTHR33515">
    <property type="entry name" value="RIBOSOME-BINDING FACTOR A, CHLOROPLASTIC-RELATED"/>
    <property type="match status" value="1"/>
</dbReference>
<dbReference type="PANTHER" id="PTHR33515:SF1">
    <property type="entry name" value="RIBOSOME-BINDING FACTOR A, CHLOROPLASTIC-RELATED"/>
    <property type="match status" value="1"/>
</dbReference>
<dbReference type="Pfam" id="PF02033">
    <property type="entry name" value="RBFA"/>
    <property type="match status" value="1"/>
</dbReference>
<dbReference type="SUPFAM" id="SSF89919">
    <property type="entry name" value="Ribosome-binding factor A, RbfA"/>
    <property type="match status" value="1"/>
</dbReference>
<dbReference type="PROSITE" id="PS01319">
    <property type="entry name" value="RBFA"/>
    <property type="match status" value="1"/>
</dbReference>
<keyword id="KW-0963">Cytoplasm</keyword>
<keyword id="KW-1185">Reference proteome</keyword>
<keyword id="KW-0690">Ribosome biogenesis</keyword>
<comment type="function">
    <text evidence="1">One of several proteins that assist in the late maturation steps of the functional core of the 30S ribosomal subunit. Associates with free 30S ribosomal subunits (but not with 30S subunits that are part of 70S ribosomes or polysomes). Required for efficient processing of 16S rRNA. May interact with the 5'-terminal helix region of 16S rRNA.</text>
</comment>
<comment type="subunit">
    <text evidence="1">Monomer. Binds 30S ribosomal subunits, but not 50S ribosomal subunits or 70S ribosomes.</text>
</comment>
<comment type="subcellular location">
    <subcellularLocation>
        <location evidence="1">Cytoplasm</location>
    </subcellularLocation>
</comment>
<comment type="similarity">
    <text evidence="1">Belongs to the RbfA family.</text>
</comment>
<evidence type="ECO:0000255" key="1">
    <source>
        <dbReference type="HAMAP-Rule" id="MF_00003"/>
    </source>
</evidence>
<accession>A5I4J2</accession>
<accession>A7G5P3</accession>
<name>RBFA_CLOBH</name>
<reference key="1">
    <citation type="journal article" date="2007" name="Genome Res.">
        <title>Genome sequence of a proteolytic (Group I) Clostridium botulinum strain Hall A and comparative analysis of the clostridial genomes.</title>
        <authorList>
            <person name="Sebaihia M."/>
            <person name="Peck M.W."/>
            <person name="Minton N.P."/>
            <person name="Thomson N.R."/>
            <person name="Holden M.T.G."/>
            <person name="Mitchell W.J."/>
            <person name="Carter A.T."/>
            <person name="Bentley S.D."/>
            <person name="Mason D.R."/>
            <person name="Crossman L."/>
            <person name="Paul C.J."/>
            <person name="Ivens A."/>
            <person name="Wells-Bennik M.H.J."/>
            <person name="Davis I.J."/>
            <person name="Cerdeno-Tarraga A.M."/>
            <person name="Churcher C."/>
            <person name="Quail M.A."/>
            <person name="Chillingworth T."/>
            <person name="Feltwell T."/>
            <person name="Fraser A."/>
            <person name="Goodhead I."/>
            <person name="Hance Z."/>
            <person name="Jagels K."/>
            <person name="Larke N."/>
            <person name="Maddison M."/>
            <person name="Moule S."/>
            <person name="Mungall K."/>
            <person name="Norbertczak H."/>
            <person name="Rabbinowitsch E."/>
            <person name="Sanders M."/>
            <person name="Simmonds M."/>
            <person name="White B."/>
            <person name="Whithead S."/>
            <person name="Parkhill J."/>
        </authorList>
    </citation>
    <scope>NUCLEOTIDE SEQUENCE [LARGE SCALE GENOMIC DNA]</scope>
    <source>
        <strain>Hall / ATCC 3502 / NCTC 13319 / Type A</strain>
    </source>
</reference>
<reference key="2">
    <citation type="journal article" date="2007" name="PLoS ONE">
        <title>Analysis of the neurotoxin complex genes in Clostridium botulinum A1-A4 and B1 strains: BoNT/A3, /Ba4 and /B1 clusters are located within plasmids.</title>
        <authorList>
            <person name="Smith T.J."/>
            <person name="Hill K.K."/>
            <person name="Foley B.T."/>
            <person name="Detter J.C."/>
            <person name="Munk A.C."/>
            <person name="Bruce D.C."/>
            <person name="Doggett N.A."/>
            <person name="Smith L.A."/>
            <person name="Marks J.D."/>
            <person name="Xie G."/>
            <person name="Brettin T.S."/>
        </authorList>
    </citation>
    <scope>NUCLEOTIDE SEQUENCE [LARGE SCALE GENOMIC DNA]</scope>
    <source>
        <strain>Hall / ATCC 3502 / NCTC 13319 / Type A</strain>
    </source>
</reference>
<protein>
    <recommendedName>
        <fullName evidence="1">Ribosome-binding factor A</fullName>
    </recommendedName>
</protein>
<proteinExistence type="inferred from homology"/>